<organism>
    <name type="scientific">Streptomyces peucetius</name>
    <dbReference type="NCBI Taxonomy" id="1950"/>
    <lineage>
        <taxon>Bacteria</taxon>
        <taxon>Bacillati</taxon>
        <taxon>Actinomycetota</taxon>
        <taxon>Actinomycetes</taxon>
        <taxon>Kitasatosporales</taxon>
        <taxon>Streptomycetaceae</taxon>
        <taxon>Streptomyces</taxon>
    </lineage>
</organism>
<evidence type="ECO:0000255" key="1"/>
<evidence type="ECO:0000305" key="2"/>
<evidence type="ECO:0000305" key="3">
    <source>
    </source>
</evidence>
<gene>
    <name type="primary">dnrP</name>
</gene>
<dbReference type="EC" id="3.1.1.-"/>
<dbReference type="EMBL" id="L40425">
    <property type="protein sequence ID" value="AAA99002.1"/>
    <property type="molecule type" value="Genomic_DNA"/>
</dbReference>
<dbReference type="SMR" id="Q54809"/>
<dbReference type="ESTHER" id="strpe-dnrP">
    <property type="family name" value="Aclacinomycin-methylesterase_RdmC"/>
</dbReference>
<dbReference type="KEGG" id="ag:AAA99002"/>
<dbReference type="BioCyc" id="MetaCyc:MONOMER-18174"/>
<dbReference type="UniPathway" id="UPA00054"/>
<dbReference type="UniPathway" id="UPA01040"/>
<dbReference type="GO" id="GO:0106435">
    <property type="term" value="F:carboxylesterase activity"/>
    <property type="evidence" value="ECO:0000314"/>
    <property type="project" value="UniProtKB"/>
</dbReference>
<dbReference type="GO" id="GO:0004806">
    <property type="term" value="F:triacylglycerol lipase activity"/>
    <property type="evidence" value="ECO:0007669"/>
    <property type="project" value="TreeGrafter"/>
</dbReference>
<dbReference type="GO" id="GO:0017000">
    <property type="term" value="P:antibiotic biosynthetic process"/>
    <property type="evidence" value="ECO:0000315"/>
    <property type="project" value="UniProtKB"/>
</dbReference>
<dbReference type="GO" id="GO:1901771">
    <property type="term" value="P:daunorubicin biosynthetic process"/>
    <property type="evidence" value="ECO:0000315"/>
    <property type="project" value="UniProtKB"/>
</dbReference>
<dbReference type="GO" id="GO:0044598">
    <property type="term" value="P:doxorubicin metabolic process"/>
    <property type="evidence" value="ECO:0000315"/>
    <property type="project" value="UniProtKB"/>
</dbReference>
<dbReference type="GO" id="GO:0046503">
    <property type="term" value="P:glycerolipid catabolic process"/>
    <property type="evidence" value="ECO:0007669"/>
    <property type="project" value="TreeGrafter"/>
</dbReference>
<dbReference type="FunFam" id="3.40.50.1820:FF:000592">
    <property type="entry name" value="Aclacinomycin methylesterase RdmC"/>
    <property type="match status" value="1"/>
</dbReference>
<dbReference type="Gene3D" id="3.40.50.1820">
    <property type="entry name" value="alpha/beta hydrolase"/>
    <property type="match status" value="1"/>
</dbReference>
<dbReference type="InterPro" id="IPR050471">
    <property type="entry name" value="AB_hydrolase"/>
</dbReference>
<dbReference type="InterPro" id="IPR000073">
    <property type="entry name" value="AB_hydrolase_1"/>
</dbReference>
<dbReference type="InterPro" id="IPR029058">
    <property type="entry name" value="AB_hydrolase_fold"/>
</dbReference>
<dbReference type="PANTHER" id="PTHR43433:SF5">
    <property type="entry name" value="AB HYDROLASE-1 DOMAIN-CONTAINING PROTEIN"/>
    <property type="match status" value="1"/>
</dbReference>
<dbReference type="PANTHER" id="PTHR43433">
    <property type="entry name" value="HYDROLASE, ALPHA/BETA FOLD FAMILY PROTEIN"/>
    <property type="match status" value="1"/>
</dbReference>
<dbReference type="Pfam" id="PF00561">
    <property type="entry name" value="Abhydrolase_1"/>
    <property type="match status" value="1"/>
</dbReference>
<dbReference type="SUPFAM" id="SSF53474">
    <property type="entry name" value="alpha/beta-Hydrolases"/>
    <property type="match status" value="1"/>
</dbReference>
<feature type="chain" id="PRO_0000425681" description="Rhodomycin D methylesterase DnrP">
    <location>
        <begin position="1"/>
        <end position="298"/>
    </location>
</feature>
<feature type="domain" description="AB hydrolase-1" evidence="1">
    <location>
        <begin position="25"/>
        <end position="277"/>
    </location>
</feature>
<protein>
    <recommendedName>
        <fullName>Rhodomycin D methylesterase DnrP</fullName>
        <ecNumber>3.1.1.-</ecNumber>
    </recommendedName>
    <alternativeName>
        <fullName>10-carbomethoxy-13-deoxycarminomycin esterase</fullName>
    </alternativeName>
    <alternativeName>
        <fullName>4-O-methylrhodomycin D methylesterase</fullName>
    </alternativeName>
</protein>
<proteinExistence type="inferred from homology"/>
<reference key="1">
    <citation type="journal article" date="1995" name="J. Bacteriol.">
        <title>Functional characterization and transcriptional analysis of a gene cluster governing early and late steps in daunorubicin biosynthesis in Streptomyces peucetius.</title>
        <authorList>
            <person name="Madduri K."/>
            <person name="Hutchinson C.R."/>
        </authorList>
    </citation>
    <scope>NUCLEOTIDE SEQUENCE [GENOMIC DNA]</scope>
    <scope>FUNCTION</scope>
</reference>
<sequence>MPTRMITNDEVTLWSEGLGDPADAPLLLIAGGNLSAKSWPDEFVERLVAAGHFVIRYDHRDTGRSSRCDFALHPYGFDELAADALAVLDGWQVRAAHVVGMSLGNTIGQLLALDAPERLLTLTVMLGGALDVDFDADLEAALKGEPSVSGLPVPSQRFLDMMTMLQQPAETDEELLERRVEKWRLLNGEGVPFDADEFRRRELLAAGHAGTFDEPIVHHMIPLPPVSRGAELSRVTTPVLAIQAMCDPAAPPPHARHLANRIPGARVVEIENMGHALPLAVHEPLAAAICAHTRAATV</sequence>
<comment type="function">
    <text evidence="3">Involved in the biosynthesis of the anthracyclines carminomycin and daunorubicin (daunomycin) which are aromatic polyketide antibiotics that exhibit high cytotoxicity and are widely applied in the chemotherapy of a variety of cancers. Catalyzes the removal of methyl group from the carbomethoxy group of rhodomycin D (10-carbomethoxy-13-deoxycarminomycin) and 4-O-methylrhodomycin D to yield 10-carboxy-13-deoxycarminomycin and 10-carboxy-13-deoxydaunorubicin, respectively. Could be also involved in the decarboxylation of 10-carboxy-13-deoxycarminomycin and 10-carboxy-13-deoxydaunorubicin to yield 13-deoxycarminomycin and 13-deoxydaunorubicin, respectively. It seems that DnrK may influence the ability of DnrP to carry out the decarboxylation (Probable).</text>
</comment>
<comment type="catalytic activity">
    <reaction>
        <text>rhodomycin D + H2O = 10-carboxy-13-deoxycarminomycin + methanol + H(+)</text>
        <dbReference type="Rhea" id="RHEA:40247"/>
        <dbReference type="ChEBI" id="CHEBI:15377"/>
        <dbReference type="ChEBI" id="CHEBI:15378"/>
        <dbReference type="ChEBI" id="CHEBI:17790"/>
        <dbReference type="ChEBI" id="CHEBI:77073"/>
        <dbReference type="ChEBI" id="CHEBI:77077"/>
    </reaction>
</comment>
<comment type="catalytic activity">
    <reaction>
        <text>4-O-methylrhodomycin D + H2O = 10-carboxy-13-deoxydaunorubicin + methanol + H(+)</text>
        <dbReference type="Rhea" id="RHEA:40251"/>
        <dbReference type="ChEBI" id="CHEBI:15377"/>
        <dbReference type="ChEBI" id="CHEBI:15378"/>
        <dbReference type="ChEBI" id="CHEBI:17790"/>
        <dbReference type="ChEBI" id="CHEBI:77074"/>
        <dbReference type="ChEBI" id="CHEBI:77076"/>
    </reaction>
</comment>
<comment type="pathway">
    <text>Antibiotic biosynthesis; daunorubicin biosynthesis.</text>
</comment>
<comment type="pathway">
    <text>Antibiotic biosynthesis; carminomycin biosynthesis.</text>
</comment>
<comment type="similarity">
    <text evidence="2">Belongs to the methyl esterase DnrP family.</text>
</comment>
<accession>Q54809</accession>
<name>DNRP_STRPE</name>
<keyword id="KW-0045">Antibiotic biosynthesis</keyword>
<keyword id="KW-0378">Hydrolase</keyword>